<dbReference type="EC" id="2.4.2.17" evidence="1"/>
<dbReference type="EMBL" id="CP000726">
    <property type="protein sequence ID" value="ABS34056.1"/>
    <property type="molecule type" value="Genomic_DNA"/>
</dbReference>
<dbReference type="RefSeq" id="WP_003358779.1">
    <property type="nucleotide sequence ID" value="NC_009697.1"/>
</dbReference>
<dbReference type="SMR" id="A7FU76"/>
<dbReference type="GeneID" id="5185821"/>
<dbReference type="KEGG" id="cba:CLB_1586"/>
<dbReference type="HOGENOM" id="CLU_038115_2_0_9"/>
<dbReference type="UniPathway" id="UPA00031">
    <property type="reaction ID" value="UER00006"/>
</dbReference>
<dbReference type="GO" id="GO:0005737">
    <property type="term" value="C:cytoplasm"/>
    <property type="evidence" value="ECO:0007669"/>
    <property type="project" value="UniProtKB-SubCell"/>
</dbReference>
<dbReference type="GO" id="GO:0005524">
    <property type="term" value="F:ATP binding"/>
    <property type="evidence" value="ECO:0007669"/>
    <property type="project" value="UniProtKB-KW"/>
</dbReference>
<dbReference type="GO" id="GO:0003879">
    <property type="term" value="F:ATP phosphoribosyltransferase activity"/>
    <property type="evidence" value="ECO:0007669"/>
    <property type="project" value="UniProtKB-UniRule"/>
</dbReference>
<dbReference type="GO" id="GO:0000105">
    <property type="term" value="P:L-histidine biosynthetic process"/>
    <property type="evidence" value="ECO:0007669"/>
    <property type="project" value="UniProtKB-UniRule"/>
</dbReference>
<dbReference type="CDD" id="cd13595">
    <property type="entry name" value="PBP2_HisGs"/>
    <property type="match status" value="1"/>
</dbReference>
<dbReference type="FunFam" id="3.40.190.10:FF:000008">
    <property type="entry name" value="ATP phosphoribosyltransferase"/>
    <property type="match status" value="1"/>
</dbReference>
<dbReference type="FunFam" id="3.40.190.10:FF:000011">
    <property type="entry name" value="ATP phosphoribosyltransferase"/>
    <property type="match status" value="1"/>
</dbReference>
<dbReference type="Gene3D" id="3.40.190.10">
    <property type="entry name" value="Periplasmic binding protein-like II"/>
    <property type="match status" value="2"/>
</dbReference>
<dbReference type="HAMAP" id="MF_01018">
    <property type="entry name" value="HisG_Short"/>
    <property type="match status" value="1"/>
</dbReference>
<dbReference type="InterPro" id="IPR013820">
    <property type="entry name" value="ATP_PRibTrfase_cat"/>
</dbReference>
<dbReference type="InterPro" id="IPR018198">
    <property type="entry name" value="ATP_PRibTrfase_CS"/>
</dbReference>
<dbReference type="InterPro" id="IPR001348">
    <property type="entry name" value="ATP_PRibTrfase_HisG"/>
</dbReference>
<dbReference type="InterPro" id="IPR024893">
    <property type="entry name" value="ATP_PRibTrfase_HisG_short"/>
</dbReference>
<dbReference type="NCBIfam" id="TIGR00070">
    <property type="entry name" value="hisG"/>
    <property type="match status" value="1"/>
</dbReference>
<dbReference type="PANTHER" id="PTHR21403:SF8">
    <property type="entry name" value="ATP PHOSPHORIBOSYLTRANSFERASE"/>
    <property type="match status" value="1"/>
</dbReference>
<dbReference type="PANTHER" id="PTHR21403">
    <property type="entry name" value="ATP PHOSPHORIBOSYLTRANSFERASE ATP-PRTASE"/>
    <property type="match status" value="1"/>
</dbReference>
<dbReference type="Pfam" id="PF01634">
    <property type="entry name" value="HisG"/>
    <property type="match status" value="1"/>
</dbReference>
<dbReference type="SUPFAM" id="SSF53850">
    <property type="entry name" value="Periplasmic binding protein-like II"/>
    <property type="match status" value="1"/>
</dbReference>
<dbReference type="PROSITE" id="PS01316">
    <property type="entry name" value="ATP_P_PHORIBOSYLTR"/>
    <property type="match status" value="1"/>
</dbReference>
<name>HIS1_CLOB1</name>
<reference key="1">
    <citation type="journal article" date="2007" name="PLoS ONE">
        <title>Analysis of the neurotoxin complex genes in Clostridium botulinum A1-A4 and B1 strains: BoNT/A3, /Ba4 and /B1 clusters are located within plasmids.</title>
        <authorList>
            <person name="Smith T.J."/>
            <person name="Hill K.K."/>
            <person name="Foley B.T."/>
            <person name="Detter J.C."/>
            <person name="Munk A.C."/>
            <person name="Bruce D.C."/>
            <person name="Doggett N.A."/>
            <person name="Smith L.A."/>
            <person name="Marks J.D."/>
            <person name="Xie G."/>
            <person name="Brettin T.S."/>
        </authorList>
    </citation>
    <scope>NUCLEOTIDE SEQUENCE [LARGE SCALE GENOMIC DNA]</scope>
    <source>
        <strain>ATCC 19397 / Type A</strain>
    </source>
</reference>
<feature type="chain" id="PRO_0000319515" description="ATP phosphoribosyltransferase">
    <location>
        <begin position="1"/>
        <end position="212"/>
    </location>
</feature>
<comment type="function">
    <text evidence="1">Catalyzes the condensation of ATP and 5-phosphoribose 1-diphosphate to form N'-(5'-phosphoribosyl)-ATP (PR-ATP). Has a crucial role in the pathway because the rate of histidine biosynthesis seems to be controlled primarily by regulation of HisG enzymatic activity.</text>
</comment>
<comment type="catalytic activity">
    <reaction evidence="1">
        <text>1-(5-phospho-beta-D-ribosyl)-ATP + diphosphate = 5-phospho-alpha-D-ribose 1-diphosphate + ATP</text>
        <dbReference type="Rhea" id="RHEA:18473"/>
        <dbReference type="ChEBI" id="CHEBI:30616"/>
        <dbReference type="ChEBI" id="CHEBI:33019"/>
        <dbReference type="ChEBI" id="CHEBI:58017"/>
        <dbReference type="ChEBI" id="CHEBI:73183"/>
        <dbReference type="EC" id="2.4.2.17"/>
    </reaction>
</comment>
<comment type="pathway">
    <text evidence="1">Amino-acid biosynthesis; L-histidine biosynthesis; L-histidine from 5-phospho-alpha-D-ribose 1-diphosphate: step 1/9.</text>
</comment>
<comment type="subunit">
    <text evidence="1">Heteromultimer composed of HisG and HisZ subunits.</text>
</comment>
<comment type="subcellular location">
    <subcellularLocation>
        <location evidence="1">Cytoplasm</location>
    </subcellularLocation>
</comment>
<comment type="domain">
    <text>Lacks the C-terminal regulatory region which is replaced by HisZ.</text>
</comment>
<comment type="similarity">
    <text evidence="1">Belongs to the ATP phosphoribosyltransferase family. Short subfamily.</text>
</comment>
<organism>
    <name type="scientific">Clostridium botulinum (strain ATCC 19397 / Type A)</name>
    <dbReference type="NCBI Taxonomy" id="441770"/>
    <lineage>
        <taxon>Bacteria</taxon>
        <taxon>Bacillati</taxon>
        <taxon>Bacillota</taxon>
        <taxon>Clostridia</taxon>
        <taxon>Eubacteriales</taxon>
        <taxon>Clostridiaceae</taxon>
        <taxon>Clostridium</taxon>
    </lineage>
</organism>
<proteinExistence type="inferred from homology"/>
<accession>A7FU76</accession>
<keyword id="KW-0028">Amino-acid biosynthesis</keyword>
<keyword id="KW-0067">ATP-binding</keyword>
<keyword id="KW-0963">Cytoplasm</keyword>
<keyword id="KW-0328">Glycosyltransferase</keyword>
<keyword id="KW-0368">Histidine biosynthesis</keyword>
<keyword id="KW-0547">Nucleotide-binding</keyword>
<keyword id="KW-0808">Transferase</keyword>
<gene>
    <name evidence="1" type="primary">hisG</name>
    <name type="ordered locus">CLB_1586</name>
</gene>
<sequence length="212" mass="24011">MKNVKIALTKGRLEKKAIEIFKTININTRELEDKGRKLIFNCENEEYNIELFLVKAKDVETYVEYGAADIGIVGKDTLMETNKEFYEVLDLNVGKCKFALAALPSFKLDQGYNRKKIATKYPNIAREYFRKKGMDVELIKIEGSVELGPIVGLADAIVDIVETGNTLRENGLVVVEDICEISARMIVNKASMKTKKDEIIKIIENVSEVIRQ</sequence>
<evidence type="ECO:0000255" key="1">
    <source>
        <dbReference type="HAMAP-Rule" id="MF_01018"/>
    </source>
</evidence>
<protein>
    <recommendedName>
        <fullName evidence="1">ATP phosphoribosyltransferase</fullName>
        <shortName evidence="1">ATP-PRT</shortName>
        <shortName evidence="1">ATP-PRTase</shortName>
        <ecNumber evidence="1">2.4.2.17</ecNumber>
    </recommendedName>
</protein>